<gene>
    <name evidence="1" type="primary">gatA</name>
    <name type="ordered locus">BH08240</name>
</gene>
<sequence>MTDLTTLTIAQARDALKKRELKATELTEAYLKAIELANPILNTYVAITAEQAMKMAAKSDSRLAKGHGGILEGIPLGIKDLFATQDVHTQACSYILDGFKPHYESTVTANLWRDGAVMLGKLNMDEFAMGSSNETSYYGPVISPWRKKDSNEKLVPGGSSGGSAAAVAAGLCVGATATDTGGSIRQPAAFTGTVGIKPTYGRCSRWGTIAFASSLDQAGPIGRNVRDCAILLKSMASFDEKDSTSVNLPVPDYESYIGQSIKGMKIGIPKEYYLEGMSPEIVELWQKGINWLKEAGAEIKNISLPHTKYALPAYYIVAPAEASSNLARYDGVRFGLRIPGKDVIEMYENTRSVGFGNEVKRRILIGTYVLSSGYYDAYYLKAQKVRTLVKRDFDQCFSSGVDAILTPATPTPAFGIADEKIKNDTVAMYLNDIFTVPVNMAGLPGISVPSGLSSNGLPLGLQLIGKPFAEEVIFQIAHIIEQAAGMFSAEKWWT</sequence>
<name>GATA_BARHE</name>
<keyword id="KW-0067">ATP-binding</keyword>
<keyword id="KW-0436">Ligase</keyword>
<keyword id="KW-0547">Nucleotide-binding</keyword>
<keyword id="KW-0648">Protein biosynthesis</keyword>
<proteinExistence type="inferred from homology"/>
<evidence type="ECO:0000255" key="1">
    <source>
        <dbReference type="HAMAP-Rule" id="MF_00120"/>
    </source>
</evidence>
<dbReference type="EC" id="6.3.5.7" evidence="1"/>
<dbReference type="EMBL" id="BX897699">
    <property type="protein sequence ID" value="CAF27623.1"/>
    <property type="molecule type" value="Genomic_DNA"/>
</dbReference>
<dbReference type="RefSeq" id="WP_011180719.1">
    <property type="nucleotide sequence ID" value="NZ_LRIJ02000001.1"/>
</dbReference>
<dbReference type="SMR" id="Q6G3E9"/>
<dbReference type="PaxDb" id="283166-BH08240"/>
<dbReference type="EnsemblBacteria" id="CAF27623">
    <property type="protein sequence ID" value="CAF27623"/>
    <property type="gene ID" value="BH08240"/>
</dbReference>
<dbReference type="GeneID" id="92985512"/>
<dbReference type="KEGG" id="bhe:BH08240"/>
<dbReference type="eggNOG" id="COG0154">
    <property type="taxonomic scope" value="Bacteria"/>
</dbReference>
<dbReference type="OrthoDB" id="9811471at2"/>
<dbReference type="Proteomes" id="UP000000421">
    <property type="component" value="Chromosome"/>
</dbReference>
<dbReference type="GO" id="GO:0030956">
    <property type="term" value="C:glutamyl-tRNA(Gln) amidotransferase complex"/>
    <property type="evidence" value="ECO:0007669"/>
    <property type="project" value="InterPro"/>
</dbReference>
<dbReference type="GO" id="GO:0005524">
    <property type="term" value="F:ATP binding"/>
    <property type="evidence" value="ECO:0007669"/>
    <property type="project" value="UniProtKB-KW"/>
</dbReference>
<dbReference type="GO" id="GO:0050567">
    <property type="term" value="F:glutaminyl-tRNA synthase (glutamine-hydrolyzing) activity"/>
    <property type="evidence" value="ECO:0007669"/>
    <property type="project" value="UniProtKB-UniRule"/>
</dbReference>
<dbReference type="GO" id="GO:0006412">
    <property type="term" value="P:translation"/>
    <property type="evidence" value="ECO:0007669"/>
    <property type="project" value="UniProtKB-UniRule"/>
</dbReference>
<dbReference type="Gene3D" id="3.90.1300.10">
    <property type="entry name" value="Amidase signature (AS) domain"/>
    <property type="match status" value="1"/>
</dbReference>
<dbReference type="HAMAP" id="MF_00120">
    <property type="entry name" value="GatA"/>
    <property type="match status" value="1"/>
</dbReference>
<dbReference type="InterPro" id="IPR000120">
    <property type="entry name" value="Amidase"/>
</dbReference>
<dbReference type="InterPro" id="IPR020556">
    <property type="entry name" value="Amidase_CS"/>
</dbReference>
<dbReference type="InterPro" id="IPR023631">
    <property type="entry name" value="Amidase_dom"/>
</dbReference>
<dbReference type="InterPro" id="IPR036928">
    <property type="entry name" value="AS_sf"/>
</dbReference>
<dbReference type="InterPro" id="IPR004412">
    <property type="entry name" value="GatA"/>
</dbReference>
<dbReference type="NCBIfam" id="TIGR00132">
    <property type="entry name" value="gatA"/>
    <property type="match status" value="1"/>
</dbReference>
<dbReference type="PANTHER" id="PTHR11895:SF151">
    <property type="entry name" value="GLUTAMYL-TRNA(GLN) AMIDOTRANSFERASE SUBUNIT A"/>
    <property type="match status" value="1"/>
</dbReference>
<dbReference type="PANTHER" id="PTHR11895">
    <property type="entry name" value="TRANSAMIDASE"/>
    <property type="match status" value="1"/>
</dbReference>
<dbReference type="Pfam" id="PF01425">
    <property type="entry name" value="Amidase"/>
    <property type="match status" value="1"/>
</dbReference>
<dbReference type="SUPFAM" id="SSF75304">
    <property type="entry name" value="Amidase signature (AS) enzymes"/>
    <property type="match status" value="1"/>
</dbReference>
<dbReference type="PROSITE" id="PS00571">
    <property type="entry name" value="AMIDASES"/>
    <property type="match status" value="1"/>
</dbReference>
<comment type="function">
    <text evidence="1">Allows the formation of correctly charged Gln-tRNA(Gln) through the transamidation of misacylated Glu-tRNA(Gln) in organisms which lack glutaminyl-tRNA synthetase. The reaction takes place in the presence of glutamine and ATP through an activated gamma-phospho-Glu-tRNA(Gln).</text>
</comment>
<comment type="catalytic activity">
    <reaction evidence="1">
        <text>L-glutamyl-tRNA(Gln) + L-glutamine + ATP + H2O = L-glutaminyl-tRNA(Gln) + L-glutamate + ADP + phosphate + H(+)</text>
        <dbReference type="Rhea" id="RHEA:17521"/>
        <dbReference type="Rhea" id="RHEA-COMP:9681"/>
        <dbReference type="Rhea" id="RHEA-COMP:9684"/>
        <dbReference type="ChEBI" id="CHEBI:15377"/>
        <dbReference type="ChEBI" id="CHEBI:15378"/>
        <dbReference type="ChEBI" id="CHEBI:29985"/>
        <dbReference type="ChEBI" id="CHEBI:30616"/>
        <dbReference type="ChEBI" id="CHEBI:43474"/>
        <dbReference type="ChEBI" id="CHEBI:58359"/>
        <dbReference type="ChEBI" id="CHEBI:78520"/>
        <dbReference type="ChEBI" id="CHEBI:78521"/>
        <dbReference type="ChEBI" id="CHEBI:456216"/>
        <dbReference type="EC" id="6.3.5.7"/>
    </reaction>
</comment>
<comment type="subunit">
    <text evidence="1">Heterotrimer of A, B and C subunits.</text>
</comment>
<comment type="similarity">
    <text evidence="1">Belongs to the amidase family. GatA subfamily.</text>
</comment>
<accession>Q6G3E9</accession>
<organism>
    <name type="scientific">Bartonella henselae (strain ATCC 49882 / DSM 28221 / CCUG 30454 / Houston 1)</name>
    <name type="common">Rochalimaea henselae</name>
    <dbReference type="NCBI Taxonomy" id="283166"/>
    <lineage>
        <taxon>Bacteria</taxon>
        <taxon>Pseudomonadati</taxon>
        <taxon>Pseudomonadota</taxon>
        <taxon>Alphaproteobacteria</taxon>
        <taxon>Hyphomicrobiales</taxon>
        <taxon>Bartonellaceae</taxon>
        <taxon>Bartonella</taxon>
    </lineage>
</organism>
<reference key="1">
    <citation type="journal article" date="2004" name="Proc. Natl. Acad. Sci. U.S.A.">
        <title>The louse-borne human pathogen Bartonella quintana is a genomic derivative of the zoonotic agent Bartonella henselae.</title>
        <authorList>
            <person name="Alsmark U.C.M."/>
            <person name="Frank A.C."/>
            <person name="Karlberg E.O."/>
            <person name="Legault B.-A."/>
            <person name="Ardell D.H."/>
            <person name="Canbaeck B."/>
            <person name="Eriksson A.-S."/>
            <person name="Naeslund A.K."/>
            <person name="Handley S.A."/>
            <person name="Huvet M."/>
            <person name="La Scola B."/>
            <person name="Holmberg M."/>
            <person name="Andersson S.G.E."/>
        </authorList>
    </citation>
    <scope>NUCLEOTIDE SEQUENCE [LARGE SCALE GENOMIC DNA]</scope>
    <source>
        <strain>ATCC 49882 / DSM 28221 / CCUG 30454 / Houston 1</strain>
    </source>
</reference>
<feature type="chain" id="PRO_0000241073" description="Glutamyl-tRNA(Gln) amidotransferase subunit A">
    <location>
        <begin position="1"/>
        <end position="494"/>
    </location>
</feature>
<feature type="active site" description="Charge relay system" evidence="1">
    <location>
        <position position="79"/>
    </location>
</feature>
<feature type="active site" description="Charge relay system" evidence="1">
    <location>
        <position position="159"/>
    </location>
</feature>
<feature type="active site" description="Acyl-ester intermediate" evidence="1">
    <location>
        <position position="183"/>
    </location>
</feature>
<protein>
    <recommendedName>
        <fullName evidence="1">Glutamyl-tRNA(Gln) amidotransferase subunit A</fullName>
        <shortName evidence="1">Glu-ADT subunit A</shortName>
        <ecNumber evidence="1">6.3.5.7</ecNumber>
    </recommendedName>
</protein>